<comment type="function">
    <text evidence="2">Component of the ubiquinol-cytochrome c reductase complex (complex III or cytochrome b-c1 complex) that is part of the mitochondrial respiratory chain. The b-c1 complex mediates electron transfer from ubiquinol to cytochrome c. Contributes to the generation of a proton gradient across the mitochondrial membrane that is then used for ATP synthesis.</text>
</comment>
<comment type="cofactor">
    <cofactor evidence="2">
        <name>heme b</name>
        <dbReference type="ChEBI" id="CHEBI:60344"/>
    </cofactor>
    <text evidence="2">Binds 2 heme b groups non-covalently.</text>
</comment>
<comment type="subunit">
    <text evidence="2">The cytochrome bc1 complex contains 11 subunits: 3 respiratory subunits (MT-CYB, CYC1 and UQCRFS1), 2 core proteins (UQCRC1 and UQCRC2) and 6 low-molecular weight proteins (UQCRH/QCR6, UQCRB/QCR7, UQCRQ/QCR8, UQCR10/QCR9, UQCR11/QCR10 and a cleavage product of UQCRFS1). This cytochrome bc1 complex then forms a dimer.</text>
</comment>
<comment type="subcellular location">
    <subcellularLocation>
        <location evidence="2">Mitochondrion inner membrane</location>
        <topology evidence="2">Multi-pass membrane protein</topology>
    </subcellularLocation>
</comment>
<comment type="miscellaneous">
    <text evidence="1">Heme 1 (or BL or b562) is low-potential and absorbs at about 562 nm, and heme 2 (or BH or b566) is high-potential and absorbs at about 566 nm.</text>
</comment>
<comment type="similarity">
    <text evidence="3 4">Belongs to the cytochrome b family.</text>
</comment>
<comment type="caution">
    <text evidence="2">The full-length protein contains only eight transmembrane helices, not nine as predicted by bioinformatics tools.</text>
</comment>
<name>CYB_ABRJE</name>
<accession>P21715</accession>
<geneLocation type="mitochondrion"/>
<sequence length="379" mass="42532">MAIMRKTHPLLKIINHSFIDLPTPCNISSWWNFGSLLGICLIIQILTGLFLAMHYTSDTATAFSSVTHICRDVNYGWLIRYLHANGASMFFICLFIHVGRGIYYGSYMLSETWNIGIVLLLTTMATAFVGYVLPWGQMSFWGATVITNLLSAIPYIGTTLVEWIWGGFSVDKATLTRFFAFHFILPFIITAFVLVHLLFLHETGSGNPSGLNSDSDKIPFHPYYTIKDLLGVILLLMVLMILVLFFPDVLGDPDNYTPANPLNTPAHIKPEWYFLFAYAILRSXPNKLGGVLALILSILVLATFPLLNSSKQHGLVYRPITQALYWIFIANLLILTWIGGQPVEYPFTTVGQVASXLYFAIIVILMPIANMIENDILKL</sequence>
<protein>
    <recommendedName>
        <fullName>Cytochrome b</fullName>
    </recommendedName>
    <alternativeName>
        <fullName>Complex III subunit 3</fullName>
    </alternativeName>
    <alternativeName>
        <fullName>Complex III subunit III</fullName>
    </alternativeName>
    <alternativeName>
        <fullName>Cytochrome b-c1 complex subunit 3</fullName>
    </alternativeName>
    <alternativeName>
        <fullName>Ubiquinol-cytochrome-c reductase complex cytochrome b subunit</fullName>
    </alternativeName>
</protein>
<keyword id="KW-0249">Electron transport</keyword>
<keyword id="KW-0349">Heme</keyword>
<keyword id="KW-0408">Iron</keyword>
<keyword id="KW-0472">Membrane</keyword>
<keyword id="KW-0479">Metal-binding</keyword>
<keyword id="KW-0496">Mitochondrion</keyword>
<keyword id="KW-0999">Mitochondrion inner membrane</keyword>
<keyword id="KW-0679">Respiratory chain</keyword>
<keyword id="KW-0812">Transmembrane</keyword>
<keyword id="KW-1133">Transmembrane helix</keyword>
<keyword id="KW-0813">Transport</keyword>
<keyword id="KW-0830">Ubiquinone</keyword>
<gene>
    <name type="primary">MT-CYB</name>
    <name type="synonym">COB</name>
    <name type="synonym">CYTB</name>
    <name type="synonym">MTCYB</name>
</gene>
<dbReference type="EMBL" id="M35714">
    <property type="protein sequence ID" value="AAA16998.2"/>
    <property type="status" value="ALT_TERM"/>
    <property type="molecule type" value="Genomic_DNA"/>
</dbReference>
<dbReference type="EMBL" id="M35715">
    <property type="protein sequence ID" value="AAA31630.1"/>
    <property type="molecule type" value="Genomic_DNA"/>
</dbReference>
<dbReference type="EMBL" id="M35716">
    <property type="protein sequence ID" value="AAA31629.1"/>
    <property type="molecule type" value="Genomic_DNA"/>
</dbReference>
<dbReference type="PIR" id="C41824">
    <property type="entry name" value="C41824"/>
</dbReference>
<dbReference type="GO" id="GO:0005743">
    <property type="term" value="C:mitochondrial inner membrane"/>
    <property type="evidence" value="ECO:0007669"/>
    <property type="project" value="UniProtKB-SubCell"/>
</dbReference>
<dbReference type="GO" id="GO:0045275">
    <property type="term" value="C:respiratory chain complex III"/>
    <property type="evidence" value="ECO:0007669"/>
    <property type="project" value="InterPro"/>
</dbReference>
<dbReference type="GO" id="GO:0046872">
    <property type="term" value="F:metal ion binding"/>
    <property type="evidence" value="ECO:0007669"/>
    <property type="project" value="UniProtKB-KW"/>
</dbReference>
<dbReference type="GO" id="GO:0008121">
    <property type="term" value="F:ubiquinol-cytochrome-c reductase activity"/>
    <property type="evidence" value="ECO:0007669"/>
    <property type="project" value="InterPro"/>
</dbReference>
<dbReference type="GO" id="GO:0006122">
    <property type="term" value="P:mitochondrial electron transport, ubiquinol to cytochrome c"/>
    <property type="evidence" value="ECO:0007669"/>
    <property type="project" value="TreeGrafter"/>
</dbReference>
<dbReference type="CDD" id="cd00290">
    <property type="entry name" value="cytochrome_b_C"/>
    <property type="match status" value="1"/>
</dbReference>
<dbReference type="CDD" id="cd00284">
    <property type="entry name" value="Cytochrome_b_N"/>
    <property type="match status" value="1"/>
</dbReference>
<dbReference type="FunFam" id="1.20.810.10:FF:000002">
    <property type="entry name" value="Cytochrome b"/>
    <property type="match status" value="1"/>
</dbReference>
<dbReference type="Gene3D" id="1.20.810.10">
    <property type="entry name" value="Cytochrome Bc1 Complex, Chain C"/>
    <property type="match status" value="1"/>
</dbReference>
<dbReference type="InterPro" id="IPR005798">
    <property type="entry name" value="Cyt_b/b6_C"/>
</dbReference>
<dbReference type="InterPro" id="IPR036150">
    <property type="entry name" value="Cyt_b/b6_C_sf"/>
</dbReference>
<dbReference type="InterPro" id="IPR005797">
    <property type="entry name" value="Cyt_b/b6_N"/>
</dbReference>
<dbReference type="InterPro" id="IPR027387">
    <property type="entry name" value="Cytb/b6-like_sf"/>
</dbReference>
<dbReference type="InterPro" id="IPR030689">
    <property type="entry name" value="Cytochrome_b"/>
</dbReference>
<dbReference type="InterPro" id="IPR048260">
    <property type="entry name" value="Cytochrome_b_C_euk/bac"/>
</dbReference>
<dbReference type="InterPro" id="IPR048259">
    <property type="entry name" value="Cytochrome_b_N_euk/bac"/>
</dbReference>
<dbReference type="InterPro" id="IPR016174">
    <property type="entry name" value="Di-haem_cyt_TM"/>
</dbReference>
<dbReference type="PANTHER" id="PTHR19271">
    <property type="entry name" value="CYTOCHROME B"/>
    <property type="match status" value="1"/>
</dbReference>
<dbReference type="PANTHER" id="PTHR19271:SF16">
    <property type="entry name" value="CYTOCHROME B"/>
    <property type="match status" value="1"/>
</dbReference>
<dbReference type="Pfam" id="PF00032">
    <property type="entry name" value="Cytochrom_B_C"/>
    <property type="match status" value="1"/>
</dbReference>
<dbReference type="Pfam" id="PF00033">
    <property type="entry name" value="Cytochrome_B"/>
    <property type="match status" value="1"/>
</dbReference>
<dbReference type="PIRSF" id="PIRSF038885">
    <property type="entry name" value="COB"/>
    <property type="match status" value="1"/>
</dbReference>
<dbReference type="SUPFAM" id="SSF81648">
    <property type="entry name" value="a domain/subunit of cytochrome bc1 complex (Ubiquinol-cytochrome c reductase)"/>
    <property type="match status" value="1"/>
</dbReference>
<dbReference type="SUPFAM" id="SSF81342">
    <property type="entry name" value="Transmembrane di-heme cytochromes"/>
    <property type="match status" value="1"/>
</dbReference>
<dbReference type="PROSITE" id="PS51003">
    <property type="entry name" value="CYTB_CTER"/>
    <property type="match status" value="1"/>
</dbReference>
<dbReference type="PROSITE" id="PS51002">
    <property type="entry name" value="CYTB_NTER"/>
    <property type="match status" value="1"/>
</dbReference>
<organism>
    <name type="scientific">Abrothrix jelskii</name>
    <name type="common">Jelski's altiplano mouse</name>
    <name type="synonym">Akodon jelskii</name>
    <dbReference type="NCBI Taxonomy" id="241142"/>
    <lineage>
        <taxon>Eukaryota</taxon>
        <taxon>Metazoa</taxon>
        <taxon>Chordata</taxon>
        <taxon>Craniata</taxon>
        <taxon>Vertebrata</taxon>
        <taxon>Euteleostomi</taxon>
        <taxon>Mammalia</taxon>
        <taxon>Eutheria</taxon>
        <taxon>Euarchontoglires</taxon>
        <taxon>Glires</taxon>
        <taxon>Rodentia</taxon>
        <taxon>Myomorpha</taxon>
        <taxon>Muroidea</taxon>
        <taxon>Cricetidae</taxon>
        <taxon>Sigmodontinae</taxon>
        <taxon>Abrothrix</taxon>
    </lineage>
</organism>
<evidence type="ECO:0000250" key="1"/>
<evidence type="ECO:0000250" key="2">
    <source>
        <dbReference type="UniProtKB" id="P00157"/>
    </source>
</evidence>
<evidence type="ECO:0000255" key="3">
    <source>
        <dbReference type="PROSITE-ProRule" id="PRU00967"/>
    </source>
</evidence>
<evidence type="ECO:0000255" key="4">
    <source>
        <dbReference type="PROSITE-ProRule" id="PRU00968"/>
    </source>
</evidence>
<proteinExistence type="inferred from homology"/>
<feature type="chain" id="PRO_0000060546" description="Cytochrome b">
    <location>
        <begin position="1"/>
        <end position="379"/>
    </location>
</feature>
<feature type="transmembrane region" description="Helical" evidence="2">
    <location>
        <begin position="33"/>
        <end position="53"/>
    </location>
</feature>
<feature type="transmembrane region" description="Helical" evidence="2">
    <location>
        <begin position="77"/>
        <end position="98"/>
    </location>
</feature>
<feature type="transmembrane region" description="Helical" evidence="2">
    <location>
        <begin position="113"/>
        <end position="133"/>
    </location>
</feature>
<feature type="transmembrane region" description="Helical" evidence="2">
    <location>
        <begin position="178"/>
        <end position="198"/>
    </location>
</feature>
<feature type="transmembrane region" description="Helical" evidence="2">
    <location>
        <begin position="226"/>
        <end position="246"/>
    </location>
</feature>
<feature type="transmembrane region" description="Helical" evidence="2">
    <location>
        <begin position="288"/>
        <end position="308"/>
    </location>
</feature>
<feature type="transmembrane region" description="Helical" evidence="2">
    <location>
        <begin position="320"/>
        <end position="340"/>
    </location>
</feature>
<feature type="transmembrane region" description="Helical" evidence="2">
    <location>
        <begin position="347"/>
        <end position="367"/>
    </location>
</feature>
<feature type="binding site" description="axial binding residue" evidence="2">
    <location>
        <position position="83"/>
    </location>
    <ligand>
        <name>heme b</name>
        <dbReference type="ChEBI" id="CHEBI:60344"/>
        <label>b562</label>
    </ligand>
    <ligandPart>
        <name>Fe</name>
        <dbReference type="ChEBI" id="CHEBI:18248"/>
    </ligandPart>
</feature>
<feature type="binding site" description="axial binding residue" evidence="2">
    <location>
        <position position="97"/>
    </location>
    <ligand>
        <name>heme b</name>
        <dbReference type="ChEBI" id="CHEBI:60344"/>
        <label>b566</label>
    </ligand>
    <ligandPart>
        <name>Fe</name>
        <dbReference type="ChEBI" id="CHEBI:18248"/>
    </ligandPart>
</feature>
<feature type="binding site" description="axial binding residue" evidence="2">
    <location>
        <position position="182"/>
    </location>
    <ligand>
        <name>heme b</name>
        <dbReference type="ChEBI" id="CHEBI:60344"/>
        <label>b562</label>
    </ligand>
    <ligandPart>
        <name>Fe</name>
        <dbReference type="ChEBI" id="CHEBI:18248"/>
    </ligandPart>
</feature>
<feature type="binding site" description="axial binding residue" evidence="2">
    <location>
        <position position="196"/>
    </location>
    <ligand>
        <name>heme b</name>
        <dbReference type="ChEBI" id="CHEBI:60344"/>
        <label>b566</label>
    </ligand>
    <ligandPart>
        <name>Fe</name>
        <dbReference type="ChEBI" id="CHEBI:18248"/>
    </ligandPart>
</feature>
<feature type="binding site" evidence="2">
    <location>
        <position position="201"/>
    </location>
    <ligand>
        <name>a ubiquinone</name>
        <dbReference type="ChEBI" id="CHEBI:16389"/>
    </ligand>
</feature>
<feature type="sequence variant" description="In strain: Isolate MVZ 173083 and Isolate MVZ 173084.">
    <original>V</original>
    <variation>I</variation>
    <location>
        <position position="118"/>
    </location>
</feature>
<feature type="sequence variant" description="In strain: Isolate MVZ 173083 and Isolate MVZ 173084.">
    <original>T</original>
    <variation>A</variation>
    <location>
        <position position="122"/>
    </location>
</feature>
<reference key="1">
    <citation type="submission" date="1999-07" db="EMBL/GenBank/DDBJ databases">
        <authorList>
            <person name="Smith M.F."/>
        </authorList>
    </citation>
    <scope>NUCLEOTIDE SEQUENCE [GENOMIC DNA]</scope>
    <source>
        <tissue>Liver</tissue>
    </source>
</reference>
<reference key="2">
    <citation type="journal article" date="1993" name="Biol. J. Linn. Soc. Lond.">
        <title>The diversification of South American murid rodents: evidence from mitochondrial DNA sequence data for the akodontine tribe.</title>
        <authorList>
            <person name="Smith M.F."/>
            <person name="Patton J.L."/>
        </authorList>
    </citation>
    <scope>NUCLEOTIDE SEQUENCE [GENOMIC DNA] OF 1-267</scope>
    <source>
        <tissue>Liver</tissue>
    </source>
</reference>
<reference key="3">
    <citation type="journal article" date="1991" name="Mol. Biol. Evol.">
        <title>Variation in mitochondrial cytochrome b sequence in natural populations of South American akodontine rodents (Muridae: Sigmodontinae).</title>
        <authorList>
            <person name="Smith M.F."/>
            <person name="Patton J.L."/>
        </authorList>
    </citation>
    <scope>NUCLEOTIDE SEQUENCE [GENOMIC DNA] OF 1-133</scope>
    <source>
        <strain>Isolate MVZ 173073</strain>
        <strain>Isolate MVZ 173074</strain>
        <strain>Isolate MVZ 173083</strain>
        <strain>Isolate MVZ 173084</strain>
        <tissue>Liver</tissue>
    </source>
</reference>